<comment type="function">
    <text evidence="11 14 16">Serine/threonine-protein kinase (PubMed:23666762). Involved in cell polarity and microtubule dynamics regulation. Phosphorylates DCX, MAP2 and MAP4. Phosphorylates the microtubule-associated protein MAPT/TAU (PubMed:23666762). Involved in cell polarity by phosphorylating the microtubule-associated proteins MAP2, MAP4 and MAPT/TAU at KXGS motifs, causing detachment from microtubules, and their disassembly. Involved in the regulation of neuronal migration through its dual activities in regulating cellular polarity and microtubule dynamics, possibly by phosphorylating and regulating DCX. Also acts as a positive regulator of the Wnt signaling pathway, probably by mediating phosphorylation of dishevelled proteins (DVL1, DVL2 and/or DVL3).</text>
</comment>
<comment type="catalytic activity">
    <reaction evidence="12">
        <text>L-seryl-[protein] + ATP = O-phospho-L-seryl-[protein] + ADP + H(+)</text>
        <dbReference type="Rhea" id="RHEA:17989"/>
        <dbReference type="Rhea" id="RHEA-COMP:9863"/>
        <dbReference type="Rhea" id="RHEA-COMP:11604"/>
        <dbReference type="ChEBI" id="CHEBI:15378"/>
        <dbReference type="ChEBI" id="CHEBI:29999"/>
        <dbReference type="ChEBI" id="CHEBI:30616"/>
        <dbReference type="ChEBI" id="CHEBI:83421"/>
        <dbReference type="ChEBI" id="CHEBI:456216"/>
        <dbReference type="EC" id="2.7.11.1"/>
    </reaction>
</comment>
<comment type="catalytic activity">
    <reaction evidence="12">
        <text>L-threonyl-[protein] + ATP = O-phospho-L-threonyl-[protein] + ADP + H(+)</text>
        <dbReference type="Rhea" id="RHEA:46608"/>
        <dbReference type="Rhea" id="RHEA-COMP:11060"/>
        <dbReference type="Rhea" id="RHEA-COMP:11605"/>
        <dbReference type="ChEBI" id="CHEBI:15378"/>
        <dbReference type="ChEBI" id="CHEBI:30013"/>
        <dbReference type="ChEBI" id="CHEBI:30616"/>
        <dbReference type="ChEBI" id="CHEBI:61977"/>
        <dbReference type="ChEBI" id="CHEBI:456216"/>
        <dbReference type="EC" id="2.7.11.1"/>
    </reaction>
</comment>
<comment type="catalytic activity">
    <reaction>
        <text>L-seryl-[tau protein] + ATP = O-phospho-L-seryl-[tau protein] + ADP + H(+)</text>
        <dbReference type="Rhea" id="RHEA:12801"/>
        <dbReference type="Rhea" id="RHEA-COMP:13701"/>
        <dbReference type="Rhea" id="RHEA-COMP:13702"/>
        <dbReference type="ChEBI" id="CHEBI:15378"/>
        <dbReference type="ChEBI" id="CHEBI:29999"/>
        <dbReference type="ChEBI" id="CHEBI:30616"/>
        <dbReference type="ChEBI" id="CHEBI:83421"/>
        <dbReference type="ChEBI" id="CHEBI:456216"/>
        <dbReference type="EC" id="2.7.11.26"/>
    </reaction>
</comment>
<comment type="catalytic activity">
    <reaction>
        <text>L-threonyl-[tau protein] + ATP = O-phospho-L-threonyl-[tau protein] + ADP + H(+)</text>
        <dbReference type="Rhea" id="RHEA:53904"/>
        <dbReference type="Rhea" id="RHEA-COMP:13703"/>
        <dbReference type="Rhea" id="RHEA-COMP:13704"/>
        <dbReference type="ChEBI" id="CHEBI:15378"/>
        <dbReference type="ChEBI" id="CHEBI:30013"/>
        <dbReference type="ChEBI" id="CHEBI:30616"/>
        <dbReference type="ChEBI" id="CHEBI:61977"/>
        <dbReference type="ChEBI" id="CHEBI:456216"/>
        <dbReference type="EC" id="2.7.11.26"/>
    </reaction>
</comment>
<comment type="cofactor">
    <cofactor evidence="1">
        <name>Mg(2+)</name>
        <dbReference type="ChEBI" id="CHEBI:18420"/>
    </cofactor>
</comment>
<comment type="activity regulation">
    <text evidence="1 12 14">Inhibited by phosphorylation at Ser-219 (By similarity). Activated by phosphorylation on Thr-215.</text>
</comment>
<comment type="subunit">
    <text evidence="16">Interacts with MAPT/TAU.</text>
</comment>
<comment type="interaction">
    <interactant intactId="EBI-968587">
        <id>Q9P0L2</id>
    </interactant>
    <interactant intactId="EBI-77613">
        <id>P05067</id>
        <label>APP</label>
    </interactant>
    <organismsDiffer>false</organismsDiffer>
    <experiments>3</experiments>
</comment>
<comment type="interaction">
    <interactant intactId="EBI-968587">
        <id>Q9P0L2</id>
    </interactant>
    <interactant intactId="EBI-1176455">
        <id>P63172</id>
        <label>DYNLT1</label>
    </interactant>
    <organismsDiffer>false</organismsDiffer>
    <experiments>3</experiments>
</comment>
<comment type="interaction">
    <interactant intactId="EBI-968587">
        <id>Q9P0L2</id>
    </interactant>
    <interactant intactId="EBI-6509505">
        <id>Q0VD86</id>
        <label>INCA1</label>
    </interactant>
    <organismsDiffer>false</organismsDiffer>
    <experiments>3</experiments>
</comment>
<comment type="interaction">
    <interactant intactId="EBI-968587">
        <id>Q9P0L2</id>
    </interactant>
    <interactant intactId="EBI-727338">
        <id>O95988</id>
        <label>TCL1B</label>
    </interactant>
    <organismsDiffer>false</organismsDiffer>
    <experiments>5</experiments>
</comment>
<comment type="interaction">
    <interactant intactId="EBI-968587">
        <id>Q9P0L2</id>
    </interactant>
    <interactant intactId="EBI-12111538">
        <id>Q8IY57-5</id>
        <label>YAF2</label>
    </interactant>
    <organismsDiffer>false</organismsDiffer>
    <experiments>3</experiments>
</comment>
<comment type="subcellular location">
    <subcellularLocation>
        <location evidence="15">Cell membrane</location>
        <topology evidence="15">Peripheral membrane protein</topology>
    </subcellularLocation>
    <subcellularLocation>
        <location evidence="1">Cytoplasm</location>
        <location evidence="1">Cytoskeleton</location>
    </subcellularLocation>
    <subcellularLocation>
        <location evidence="16">Cytoplasm</location>
    </subcellularLocation>
    <subcellularLocation>
        <location evidence="16">Cell projection</location>
        <location evidence="16">Dendrite</location>
    </subcellularLocation>
    <text evidence="1">Appears to localize to an intracellular network.</text>
</comment>
<comment type="alternative products">
    <event type="alternative splicing"/>
    <isoform>
        <id>Q9P0L2-1</id>
        <name>1</name>
        <sequence type="displayed"/>
    </isoform>
    <isoform>
        <id>Q9P0L2-2</id>
        <name evidence="20">2</name>
        <sequence type="described" ref="VSP_051702 VSP_051704"/>
    </isoform>
    <isoform>
        <id>Q9P0L2-3</id>
        <name evidence="20">3</name>
        <sequence type="described" ref="VSP_051703 VSP_051704"/>
    </isoform>
</comment>
<comment type="tissue specificity">
    <text evidence="17">Highly expressed in heart, skeletal muscle, brain, fetal brain and fetal kidney.</text>
</comment>
<comment type="domain">
    <text evidence="1">The UBA domain does not seem to bind ubiquitin and ubiquitin-like and might play a role in regulating the enzyme conformation and localization. Activation of the kinase activity following phosphorylation at Thr-208 is accompanied by a conformational change that alters the orientation of the UBA domain with respect to the catalytic domain (By similarity).</text>
</comment>
<comment type="domain">
    <text evidence="15">The KA1 domain mediates binding to phospholipids and targeting to membranes. Binds phosphatidic acid (PA), phosphatidylserine (PtdSer) and phosphatidylinositol 4,5-bisphosphate (PtdIns(4,5)P2).</text>
</comment>
<comment type="PTM">
    <text evidence="1 12 14">Phosphorylation at Thr-613 by PRKCZ/aPKC in polarized epithelial cells inhibits the kinase activity (By similarity). Phosphorylated at Thr-215 by STK11/LKB1 in complex with STE20-related adapter-alpha (STRADA) pseudo kinase and CAB39. Phosphorylation at Thr-215 by TAOK1 activates the kinase activity, leading to phosphorylation and detachment of MAPT/TAU from microtubules. Phosphorylation at Ser-219 by GSK3-beta (GSK3B) inhibits the kinase activity.</text>
</comment>
<comment type="disease">
    <text>Genetic variations in MARK1 may be associated with susceptibility to autism. MARK1 is overexpressed in the prefrontal cortex of patients with autism and causes changes in the function of cortical dendrites.</text>
</comment>
<comment type="miscellaneous">
    <text evidence="21">Phosphorylation of MAPT/tau by MARK1 could play a role in early steps of Alzheimer disease. Pathological aggregation of MAPT/tau to neurofibrillary tangles, filamentous structures consisting of paired helical filaments (PHFs), is one of the hallmarks of Alzheimer disease. Hyperphosphorylation by MARK1 could be the initial step for this abnormal aggregation of tau in Alzheimer disease and animal models of tauopathy (PubMed:11089574).</text>
</comment>
<comment type="similarity">
    <text evidence="20">Belongs to the protein kinase superfamily. CAMK Ser/Thr protein kinase family. SNF1 subfamily.</text>
</comment>
<comment type="sequence caution" evidence="20">
    <conflict type="erroneous initiation">
        <sequence resource="EMBL-CDS" id="BAA96001"/>
    </conflict>
</comment>
<comment type="sequence caution" evidence="20">
    <conflict type="frameshift">
        <sequence resource="EMBL-CDS" id="BAB55152"/>
    </conflict>
</comment>
<reference evidence="20" key="1">
    <citation type="journal article" date="2004" name="EMBO J.">
        <title>LKB1 is a master kinase that activates 13 kinases of the AMPK subfamily, including MARK/PAR-1.</title>
        <authorList>
            <person name="Lizcano J.M."/>
            <person name="Goeransson O."/>
            <person name="Toth R."/>
            <person name="Deak M."/>
            <person name="Morrice N.A."/>
            <person name="Boudeau J."/>
            <person name="Hawley S.A."/>
            <person name="Udd L."/>
            <person name="Maekelae T.P."/>
            <person name="Hardie D.G."/>
            <person name="Alessi D.R."/>
        </authorList>
    </citation>
    <scope>NUCLEOTIDE SEQUENCE [MRNA] (ISOFORM 1)</scope>
    <scope>ACTIVITY REGULATION</scope>
    <scope>PHOSPHORYLATION AT THR-215</scope>
    <scope>MUTAGENESIS OF THR-215</scope>
</reference>
<reference evidence="20 22" key="2">
    <citation type="submission" date="1999-05" db="EMBL/GenBank/DDBJ databases">
        <title>Cloning and isolating human MARK.</title>
        <authorList>
            <person name="Zhou H.J."/>
            <person name="Huang X.W."/>
            <person name="Zhou Y."/>
            <person name="Hu S.L."/>
            <person name="Yuan J.G."/>
            <person name="Qiang B.Q."/>
        </authorList>
    </citation>
    <scope>NUCLEOTIDE SEQUENCE [MRNA] (ISOFORM 1)</scope>
</reference>
<reference evidence="20 23" key="3">
    <citation type="journal article" date="2000" name="DNA Res.">
        <title>Prediction of the coding sequences of unidentified human genes. XVII. The complete sequences of 100 new cDNA clones from brain which code for large proteins in vitro.</title>
        <authorList>
            <person name="Nagase T."/>
            <person name="Kikuno R."/>
            <person name="Ishikawa K."/>
            <person name="Hirosawa M."/>
            <person name="Ohara O."/>
        </authorList>
    </citation>
    <scope>NUCLEOTIDE SEQUENCE [LARGE SCALE MRNA] (ISOFORM 3)</scope>
    <source>
        <tissue evidence="10">Brain</tissue>
    </source>
</reference>
<reference evidence="20 24" key="4">
    <citation type="journal article" date="2004" name="Nat. Genet.">
        <title>Complete sequencing and characterization of 21,243 full-length human cDNAs.</title>
        <authorList>
            <person name="Ota T."/>
            <person name="Suzuki Y."/>
            <person name="Nishikawa T."/>
            <person name="Otsuki T."/>
            <person name="Sugiyama T."/>
            <person name="Irie R."/>
            <person name="Wakamatsu A."/>
            <person name="Hayashi K."/>
            <person name="Sato H."/>
            <person name="Nagai K."/>
            <person name="Kimura K."/>
            <person name="Makita H."/>
            <person name="Sekine M."/>
            <person name="Obayashi M."/>
            <person name="Nishi T."/>
            <person name="Shibahara T."/>
            <person name="Tanaka T."/>
            <person name="Ishii S."/>
            <person name="Yamamoto J."/>
            <person name="Saito K."/>
            <person name="Kawai Y."/>
            <person name="Isono Y."/>
            <person name="Nakamura Y."/>
            <person name="Nagahari K."/>
            <person name="Murakami K."/>
            <person name="Yasuda T."/>
            <person name="Iwayanagi T."/>
            <person name="Wagatsuma M."/>
            <person name="Shiratori A."/>
            <person name="Sudo H."/>
            <person name="Hosoiri T."/>
            <person name="Kaku Y."/>
            <person name="Kodaira H."/>
            <person name="Kondo H."/>
            <person name="Sugawara M."/>
            <person name="Takahashi M."/>
            <person name="Kanda K."/>
            <person name="Yokoi T."/>
            <person name="Furuya T."/>
            <person name="Kikkawa E."/>
            <person name="Omura Y."/>
            <person name="Abe K."/>
            <person name="Kamihara K."/>
            <person name="Katsuta N."/>
            <person name="Sato K."/>
            <person name="Tanikawa M."/>
            <person name="Yamazaki M."/>
            <person name="Ninomiya K."/>
            <person name="Ishibashi T."/>
            <person name="Yamashita H."/>
            <person name="Murakawa K."/>
            <person name="Fujimori K."/>
            <person name="Tanai H."/>
            <person name="Kimata M."/>
            <person name="Watanabe M."/>
            <person name="Hiraoka S."/>
            <person name="Chiba Y."/>
            <person name="Ishida S."/>
            <person name="Ono Y."/>
            <person name="Takiguchi S."/>
            <person name="Watanabe S."/>
            <person name="Yosida M."/>
            <person name="Hotuta T."/>
            <person name="Kusano J."/>
            <person name="Kanehori K."/>
            <person name="Takahashi-Fujii A."/>
            <person name="Hara H."/>
            <person name="Tanase T.-O."/>
            <person name="Nomura Y."/>
            <person name="Togiya S."/>
            <person name="Komai F."/>
            <person name="Hara R."/>
            <person name="Takeuchi K."/>
            <person name="Arita M."/>
            <person name="Imose N."/>
            <person name="Musashino K."/>
            <person name="Yuuki H."/>
            <person name="Oshima A."/>
            <person name="Sasaki N."/>
            <person name="Aotsuka S."/>
            <person name="Yoshikawa Y."/>
            <person name="Matsunawa H."/>
            <person name="Ichihara T."/>
            <person name="Shiohata N."/>
            <person name="Sano S."/>
            <person name="Moriya S."/>
            <person name="Momiyama H."/>
            <person name="Satoh N."/>
            <person name="Takami S."/>
            <person name="Terashima Y."/>
            <person name="Suzuki O."/>
            <person name="Nakagawa S."/>
            <person name="Senoh A."/>
            <person name="Mizoguchi H."/>
            <person name="Goto Y."/>
            <person name="Shimizu F."/>
            <person name="Wakebe H."/>
            <person name="Hishigaki H."/>
            <person name="Watanabe T."/>
            <person name="Sugiyama A."/>
            <person name="Takemoto M."/>
            <person name="Kawakami B."/>
            <person name="Yamazaki M."/>
            <person name="Watanabe K."/>
            <person name="Kumagai A."/>
            <person name="Itakura S."/>
            <person name="Fukuzumi Y."/>
            <person name="Fujimori Y."/>
            <person name="Komiyama M."/>
            <person name="Tashiro H."/>
            <person name="Tanigami A."/>
            <person name="Fujiwara T."/>
            <person name="Ono T."/>
            <person name="Yamada K."/>
            <person name="Fujii Y."/>
            <person name="Ozaki K."/>
            <person name="Hirao M."/>
            <person name="Ohmori Y."/>
            <person name="Kawabata A."/>
            <person name="Hikiji T."/>
            <person name="Kobatake N."/>
            <person name="Inagaki H."/>
            <person name="Ikema Y."/>
            <person name="Okamoto S."/>
            <person name="Okitani R."/>
            <person name="Kawakami T."/>
            <person name="Noguchi S."/>
            <person name="Itoh T."/>
            <person name="Shigeta K."/>
            <person name="Senba T."/>
            <person name="Matsumura K."/>
            <person name="Nakajima Y."/>
            <person name="Mizuno T."/>
            <person name="Morinaga M."/>
            <person name="Sasaki M."/>
            <person name="Togashi T."/>
            <person name="Oyama M."/>
            <person name="Hata H."/>
            <person name="Watanabe M."/>
            <person name="Komatsu T."/>
            <person name="Mizushima-Sugano J."/>
            <person name="Satoh T."/>
            <person name="Shirai Y."/>
            <person name="Takahashi Y."/>
            <person name="Nakagawa K."/>
            <person name="Okumura K."/>
            <person name="Nagase T."/>
            <person name="Nomura N."/>
            <person name="Kikuchi H."/>
            <person name="Masuho Y."/>
            <person name="Yamashita R."/>
            <person name="Nakai K."/>
            <person name="Yada T."/>
            <person name="Nakamura Y."/>
            <person name="Ohara O."/>
            <person name="Isogai T."/>
            <person name="Sugano S."/>
        </authorList>
    </citation>
    <scope>NUCLEOTIDE SEQUENCE [LARGE SCALE MRNA] (ISOFORM 2)</scope>
</reference>
<reference key="5">
    <citation type="journal article" date="2006" name="Nature">
        <title>The DNA sequence and biological annotation of human chromosome 1.</title>
        <authorList>
            <person name="Gregory S.G."/>
            <person name="Barlow K.F."/>
            <person name="McLay K.E."/>
            <person name="Kaul R."/>
            <person name="Swarbreck D."/>
            <person name="Dunham A."/>
            <person name="Scott C.E."/>
            <person name="Howe K.L."/>
            <person name="Woodfine K."/>
            <person name="Spencer C.C.A."/>
            <person name="Jones M.C."/>
            <person name="Gillson C."/>
            <person name="Searle S."/>
            <person name="Zhou Y."/>
            <person name="Kokocinski F."/>
            <person name="McDonald L."/>
            <person name="Evans R."/>
            <person name="Phillips K."/>
            <person name="Atkinson A."/>
            <person name="Cooper R."/>
            <person name="Jones C."/>
            <person name="Hall R.E."/>
            <person name="Andrews T.D."/>
            <person name="Lloyd C."/>
            <person name="Ainscough R."/>
            <person name="Almeida J.P."/>
            <person name="Ambrose K.D."/>
            <person name="Anderson F."/>
            <person name="Andrew R.W."/>
            <person name="Ashwell R.I.S."/>
            <person name="Aubin K."/>
            <person name="Babbage A.K."/>
            <person name="Bagguley C.L."/>
            <person name="Bailey J."/>
            <person name="Beasley H."/>
            <person name="Bethel G."/>
            <person name="Bird C.P."/>
            <person name="Bray-Allen S."/>
            <person name="Brown J.Y."/>
            <person name="Brown A.J."/>
            <person name="Buckley D."/>
            <person name="Burton J."/>
            <person name="Bye J."/>
            <person name="Carder C."/>
            <person name="Chapman J.C."/>
            <person name="Clark S.Y."/>
            <person name="Clarke G."/>
            <person name="Clee C."/>
            <person name="Cobley V."/>
            <person name="Collier R.E."/>
            <person name="Corby N."/>
            <person name="Coville G.J."/>
            <person name="Davies J."/>
            <person name="Deadman R."/>
            <person name="Dunn M."/>
            <person name="Earthrowl M."/>
            <person name="Ellington A.G."/>
            <person name="Errington H."/>
            <person name="Frankish A."/>
            <person name="Frankland J."/>
            <person name="French L."/>
            <person name="Garner P."/>
            <person name="Garnett J."/>
            <person name="Gay L."/>
            <person name="Ghori M.R.J."/>
            <person name="Gibson R."/>
            <person name="Gilby L.M."/>
            <person name="Gillett W."/>
            <person name="Glithero R.J."/>
            <person name="Grafham D.V."/>
            <person name="Griffiths C."/>
            <person name="Griffiths-Jones S."/>
            <person name="Grocock R."/>
            <person name="Hammond S."/>
            <person name="Harrison E.S.I."/>
            <person name="Hart E."/>
            <person name="Haugen E."/>
            <person name="Heath P.D."/>
            <person name="Holmes S."/>
            <person name="Holt K."/>
            <person name="Howden P.J."/>
            <person name="Hunt A.R."/>
            <person name="Hunt S.E."/>
            <person name="Hunter G."/>
            <person name="Isherwood J."/>
            <person name="James R."/>
            <person name="Johnson C."/>
            <person name="Johnson D."/>
            <person name="Joy A."/>
            <person name="Kay M."/>
            <person name="Kershaw J.K."/>
            <person name="Kibukawa M."/>
            <person name="Kimberley A.M."/>
            <person name="King A."/>
            <person name="Knights A.J."/>
            <person name="Lad H."/>
            <person name="Laird G."/>
            <person name="Lawlor S."/>
            <person name="Leongamornlert D.A."/>
            <person name="Lloyd D.M."/>
            <person name="Loveland J."/>
            <person name="Lovell J."/>
            <person name="Lush M.J."/>
            <person name="Lyne R."/>
            <person name="Martin S."/>
            <person name="Mashreghi-Mohammadi M."/>
            <person name="Matthews L."/>
            <person name="Matthews N.S.W."/>
            <person name="McLaren S."/>
            <person name="Milne S."/>
            <person name="Mistry S."/>
            <person name="Moore M.J.F."/>
            <person name="Nickerson T."/>
            <person name="O'Dell C.N."/>
            <person name="Oliver K."/>
            <person name="Palmeiri A."/>
            <person name="Palmer S.A."/>
            <person name="Parker A."/>
            <person name="Patel D."/>
            <person name="Pearce A.V."/>
            <person name="Peck A.I."/>
            <person name="Pelan S."/>
            <person name="Phelps K."/>
            <person name="Phillimore B.J."/>
            <person name="Plumb R."/>
            <person name="Rajan J."/>
            <person name="Raymond C."/>
            <person name="Rouse G."/>
            <person name="Saenphimmachak C."/>
            <person name="Sehra H.K."/>
            <person name="Sheridan E."/>
            <person name="Shownkeen R."/>
            <person name="Sims S."/>
            <person name="Skuce C.D."/>
            <person name="Smith M."/>
            <person name="Steward C."/>
            <person name="Subramanian S."/>
            <person name="Sycamore N."/>
            <person name="Tracey A."/>
            <person name="Tromans A."/>
            <person name="Van Helmond Z."/>
            <person name="Wall M."/>
            <person name="Wallis J.M."/>
            <person name="White S."/>
            <person name="Whitehead S.L."/>
            <person name="Wilkinson J.E."/>
            <person name="Willey D.L."/>
            <person name="Williams H."/>
            <person name="Wilming L."/>
            <person name="Wray P.W."/>
            <person name="Wu Z."/>
            <person name="Coulson A."/>
            <person name="Vaudin M."/>
            <person name="Sulston J.E."/>
            <person name="Durbin R.M."/>
            <person name="Hubbard T."/>
            <person name="Wooster R."/>
            <person name="Dunham I."/>
            <person name="Carter N.P."/>
            <person name="McVean G."/>
            <person name="Ross M.T."/>
            <person name="Harrow J."/>
            <person name="Olson M.V."/>
            <person name="Beck S."/>
            <person name="Rogers J."/>
            <person name="Bentley D.R."/>
        </authorList>
    </citation>
    <scope>NUCLEOTIDE SEQUENCE [LARGE SCALE GENOMIC DNA]</scope>
</reference>
<reference evidence="20 22" key="6">
    <citation type="submission" date="2005-09" db="EMBL/GenBank/DDBJ databases">
        <authorList>
            <person name="Mural R.J."/>
            <person name="Istrail S."/>
            <person name="Sutton G.G."/>
            <person name="Florea L."/>
            <person name="Halpern A.L."/>
            <person name="Mobarry C.M."/>
            <person name="Lippert R."/>
            <person name="Walenz B."/>
            <person name="Shatkay H."/>
            <person name="Dew I."/>
            <person name="Miller J.R."/>
            <person name="Flanigan M.J."/>
            <person name="Edwards N.J."/>
            <person name="Bolanos R."/>
            <person name="Fasulo D."/>
            <person name="Halldorsson B.V."/>
            <person name="Hannenhalli S."/>
            <person name="Turner R."/>
            <person name="Yooseph S."/>
            <person name="Lu F."/>
            <person name="Nusskern D.R."/>
            <person name="Shue B.C."/>
            <person name="Zheng X.H."/>
            <person name="Zhong F."/>
            <person name="Delcher A.L."/>
            <person name="Huson D.H."/>
            <person name="Kravitz S.A."/>
            <person name="Mouchard L."/>
            <person name="Reinert K."/>
            <person name="Remington K.A."/>
            <person name="Clark A.G."/>
            <person name="Waterman M.S."/>
            <person name="Eichler E.E."/>
            <person name="Adams M.D."/>
            <person name="Hunkapiller M.W."/>
            <person name="Myers E.W."/>
            <person name="Venter J.C."/>
        </authorList>
    </citation>
    <scope>NUCLEOTIDE SEQUENCE [LARGE SCALE GENOMIC DNA]</scope>
</reference>
<reference key="7">
    <citation type="journal article" date="2004" name="Genome Res.">
        <title>The status, quality, and expansion of the NIH full-length cDNA project: the Mammalian Gene Collection (MGC).</title>
        <authorList>
            <consortium name="The MGC Project Team"/>
        </authorList>
    </citation>
    <scope>NUCLEOTIDE SEQUENCE [LARGE SCALE MRNA] (ISOFORM 1)</scope>
</reference>
<reference evidence="20" key="8">
    <citation type="journal article" date="1997" name="Cell">
        <title>MARK - a novel family of protein kinases that phosphorylate microtubule-associated proteins and trigger microtubule disruption.</title>
        <authorList>
            <person name="Drewes G."/>
            <person name="Ebneth A."/>
            <person name="Preuss U."/>
            <person name="Mandelkow E.-M."/>
            <person name="Mandelkow E."/>
        </authorList>
    </citation>
    <scope>TISSUE SPECIFICITY</scope>
</reference>
<reference key="9">
    <citation type="journal article" date="2000" name="J. Neuropathol. Exp. Neurol.">
        <title>Microtubule-affinity regulating kinase (MARK) is tightly associated with neurofibrillary tangles in Alzheimer brain: a fluorescence resonance energy transfer study.</title>
        <authorList>
            <person name="Chin J.Y."/>
            <person name="Knowles R.B."/>
            <person name="Schneider A."/>
            <person name="Drewes G."/>
            <person name="Mandelkow E.M."/>
            <person name="Hyman B.T."/>
        </authorList>
    </citation>
    <scope>NEUROFIBRILLARY TANGLES IN ALZHEIMER BRAIN</scope>
</reference>
<reference key="10">
    <citation type="journal article" date="2001" name="Nat. Cell Biol.">
        <title>PAR-1 is a Dishevelled-associated kinase and a positive regulator of Wnt signalling.</title>
        <authorList>
            <person name="Sun T.-Q."/>
            <person name="Lu B."/>
            <person name="Feng J.-J."/>
            <person name="Reinhard C."/>
            <person name="Jan Y.N."/>
            <person name="Fantl W.J."/>
            <person name="Williams L.T."/>
        </authorList>
    </citation>
    <scope>FUNCTION</scope>
</reference>
<reference key="11">
    <citation type="journal article" date="2007" name="J. Biol. Chem.">
        <title>Suppression of tubulin polymerization by the LKB1-microtubule-associated protein/microtubule affinity-regulating kinase signaling.</title>
        <authorList>
            <person name="Kojima Y."/>
            <person name="Miyoshi H."/>
            <person name="Clevers H.C."/>
            <person name="Oshima M."/>
            <person name="Aoki M."/>
            <person name="Taketo M.M."/>
        </authorList>
    </citation>
    <scope>PHOSPHORYLATION AT THR-208</scope>
    <scope>ACTIVITY REGULATION</scope>
    <scope>FUNCTION</scope>
</reference>
<reference key="12">
    <citation type="journal article" date="2008" name="Hum. Mol. Genet.">
        <title>Convergent evidence identifying MAP/microtubule affinity-regulating kinase 1 (MARK1) as a susceptibility gene for autism.</title>
        <authorList>
            <person name="Maussion G."/>
            <person name="Carayol J."/>
            <person name="Lepagnol-Bestel A.M."/>
            <person name="Tores F."/>
            <person name="Loe-Mie Y."/>
            <person name="Milbreta U."/>
            <person name="Rousseau F."/>
            <person name="Fontaine K."/>
            <person name="Renaud J."/>
            <person name="Moalic J.M."/>
            <person name="Philippi A."/>
            <person name="Chedotal A."/>
            <person name="Gorwood P."/>
            <person name="Ramoz N."/>
            <person name="Hager J."/>
            <person name="Simonneau M."/>
        </authorList>
    </citation>
    <scope>POSSIBLE INVOLVEMENT IN AUTISM</scope>
</reference>
<reference key="13">
    <citation type="journal article" date="2008" name="J. Proteome Res.">
        <title>Combining protein-based IMAC, peptide-based IMAC, and MudPIT for efficient phosphoproteomic analysis.</title>
        <authorList>
            <person name="Cantin G.T."/>
            <person name="Yi W."/>
            <person name="Lu B."/>
            <person name="Park S.K."/>
            <person name="Xu T."/>
            <person name="Lee J.-D."/>
            <person name="Yates J.R. III"/>
        </authorList>
    </citation>
    <scope>IDENTIFICATION BY MASS SPECTROMETRY [LARGE SCALE ANALYSIS]</scope>
    <source>
        <tissue>Cervix carcinoma</tissue>
    </source>
</reference>
<reference key="14">
    <citation type="journal article" date="2008" name="Mol. Cell">
        <title>Kinase-selective enrichment enables quantitative phosphoproteomics of the kinome across the cell cycle.</title>
        <authorList>
            <person name="Daub H."/>
            <person name="Olsen J.V."/>
            <person name="Bairlein M."/>
            <person name="Gnad F."/>
            <person name="Oppermann F.S."/>
            <person name="Korner R."/>
            <person name="Greff Z."/>
            <person name="Keri G."/>
            <person name="Stemmann O."/>
            <person name="Mann M."/>
        </authorList>
    </citation>
    <scope>PHOSPHORYLATION [LARGE SCALE ANALYSIS] AT THR-5 AND SER-403</scope>
    <scope>IDENTIFICATION BY MASS SPECTROMETRY [LARGE SCALE ANALYSIS]</scope>
    <source>
        <tissue>Cervix carcinoma</tissue>
    </source>
</reference>
<reference key="15">
    <citation type="journal article" date="2008" name="Proc. Natl. Acad. Sci. U.S.A.">
        <title>A quantitative atlas of mitotic phosphorylation.</title>
        <authorList>
            <person name="Dephoure N."/>
            <person name="Zhou C."/>
            <person name="Villen J."/>
            <person name="Beausoleil S.A."/>
            <person name="Bakalarski C.E."/>
            <person name="Elledge S.J."/>
            <person name="Gygi S.P."/>
        </authorList>
    </citation>
    <scope>PHOSPHORYLATION [LARGE SCALE ANALYSIS] AT SER-588</scope>
    <scope>IDENTIFICATION BY MASS SPECTROMETRY [LARGE SCALE ANALYSIS]</scope>
    <source>
        <tissue>Cervix carcinoma</tissue>
    </source>
</reference>
<reference key="16">
    <citation type="journal article" date="2009" name="Mol. Cell. Proteomics">
        <title>Large-scale proteomics analysis of the human kinome.</title>
        <authorList>
            <person name="Oppermann F.S."/>
            <person name="Gnad F."/>
            <person name="Olsen J.V."/>
            <person name="Hornberger R."/>
            <person name="Greff Z."/>
            <person name="Keri G."/>
            <person name="Mann M."/>
            <person name="Daub H."/>
        </authorList>
    </citation>
    <scope>IDENTIFICATION BY MASS SPECTROMETRY [LARGE SCALE ANALYSIS]</scope>
</reference>
<reference key="17">
    <citation type="journal article" date="2009" name="Trends Biochem. Sci.">
        <title>The tau of MARK: a polarized view of the cytoskeleton.</title>
        <authorList>
            <person name="Matenia D."/>
            <person name="Mandelkow E.M."/>
        </authorList>
    </citation>
    <scope>REVIEW</scope>
</reference>
<reference key="18">
    <citation type="journal article" date="2010" name="FASEB J.">
        <title>Structure and function of polarity-inducing kinase family MARK/Par-1 within the branch of AMPK/Snf1-related kinases.</title>
        <authorList>
            <person name="Marx A."/>
            <person name="Nugoor C."/>
            <person name="Panneerselvam S."/>
            <person name="Mandelkow E."/>
        </authorList>
    </citation>
    <scope>REVIEW</scope>
</reference>
<reference key="19">
    <citation type="journal article" date="2011" name="BMC Syst. Biol.">
        <title>Initial characterization of the human central proteome.</title>
        <authorList>
            <person name="Burkard T.R."/>
            <person name="Planyavsky M."/>
            <person name="Kaupe I."/>
            <person name="Breitwieser F.P."/>
            <person name="Buerckstuemmer T."/>
            <person name="Bennett K.L."/>
            <person name="Superti-Furga G."/>
            <person name="Colinge J."/>
        </authorList>
    </citation>
    <scope>IDENTIFICATION BY MASS SPECTROMETRY [LARGE SCALE ANALYSIS]</scope>
</reference>
<reference key="20">
    <citation type="journal article" date="2011" name="Sci. Signal.">
        <title>System-wide temporal characterization of the proteome and phosphoproteome of human embryonic stem cell differentiation.</title>
        <authorList>
            <person name="Rigbolt K.T."/>
            <person name="Prokhorova T.A."/>
            <person name="Akimov V."/>
            <person name="Henningsen J."/>
            <person name="Johansen P.T."/>
            <person name="Kratchmarova I."/>
            <person name="Kassem M."/>
            <person name="Mann M."/>
            <person name="Olsen J.V."/>
            <person name="Blagoev B."/>
        </authorList>
    </citation>
    <scope>IDENTIFICATION BY MASS SPECTROMETRY [LARGE SCALE ANALYSIS]</scope>
</reference>
<reference key="21">
    <citation type="journal article" date="2013" name="J. Proteome Res.">
        <title>Toward a comprehensive characterization of a human cancer cell phosphoproteome.</title>
        <authorList>
            <person name="Zhou H."/>
            <person name="Di Palma S."/>
            <person name="Preisinger C."/>
            <person name="Peng M."/>
            <person name="Polat A.N."/>
            <person name="Heck A.J."/>
            <person name="Mohammed S."/>
        </authorList>
    </citation>
    <scope>IDENTIFICATION BY MASS SPECTROMETRY [LARGE SCALE ANALYSIS]</scope>
    <source>
        <tissue>Cervix carcinoma</tissue>
    </source>
</reference>
<reference key="22">
    <citation type="journal article" date="2013" name="NeuroMolecular Med.">
        <title>Role of individual MARK isoforms in phosphorylation of tau at Ser262 in Alzheimer's disease.</title>
        <authorList>
            <person name="Gu G.J."/>
            <person name="Lund H."/>
            <person name="Wu D."/>
            <person name="Blokzijl A."/>
            <person name="Classon C."/>
            <person name="von Euler G."/>
            <person name="Landegren U."/>
            <person name="Sunnemark D."/>
            <person name="Kamali-Moghaddam M."/>
        </authorList>
    </citation>
    <scope>FUNCTION</scope>
    <scope>INTERACTION WITH MAPT</scope>
    <scope>SUBCELLULAR LOCATION</scope>
</reference>
<reference key="23">
    <citation type="journal article" date="2006" name="J. Biol. Chem.">
        <title>Structural variations in the catalytic and ubiquitin-associated domains of microtubule-associated protein/microtubule affinity regulating kinase (MARK) 1 and MARK2.</title>
        <authorList>
            <person name="Marx A."/>
            <person name="Nugoor C."/>
            <person name="Muller J."/>
            <person name="Panneerselvam S."/>
            <person name="Timm T."/>
            <person name="Bilang M."/>
            <person name="Mylonas E."/>
            <person name="Svergun D.I."/>
            <person name="Mandelkow E.M."/>
            <person name="Mandelkow E."/>
        </authorList>
    </citation>
    <scope>X-RAY CRYSTALLOGRAPHY (2.6 ANGSTROMS) OF 45-371</scope>
</reference>
<reference key="24">
    <citation type="journal article" date="2010" name="Cell">
        <title>Kinase associated-1 domains drive MARK/PAR1 kinases to membrane targets by binding acidic phospholipids.</title>
        <authorList>
            <person name="Moravcevic K."/>
            <person name="Mendrola J.M."/>
            <person name="Schmitz K.R."/>
            <person name="Wang Y.H."/>
            <person name="Slochower D."/>
            <person name="Janmey P.A."/>
            <person name="Lemmon M.A."/>
        </authorList>
    </citation>
    <scope>X-RAY CRYSTALLOGRAPHY (1.7 ANGSTROMS) OF 683-795</scope>
    <scope>DOMAIN KA1</scope>
    <scope>SUBCELLULAR LOCATION</scope>
    <scope>MUTAGENESIS OF ARG-698; ARG-701; 771-ARG--LYS-773 AND 773-LYS-ARG-774</scope>
</reference>
<reference key="25">
    <citation type="journal article" date="2007" name="Nature">
        <title>Patterns of somatic mutation in human cancer genomes.</title>
        <authorList>
            <person name="Greenman C."/>
            <person name="Stephens P."/>
            <person name="Smith R."/>
            <person name="Dalgliesh G.L."/>
            <person name="Hunter C."/>
            <person name="Bignell G."/>
            <person name="Davies H."/>
            <person name="Teague J."/>
            <person name="Butler A."/>
            <person name="Stevens C."/>
            <person name="Edkins S."/>
            <person name="O'Meara S."/>
            <person name="Vastrik I."/>
            <person name="Schmidt E.E."/>
            <person name="Avis T."/>
            <person name="Barthorpe S."/>
            <person name="Bhamra G."/>
            <person name="Buck G."/>
            <person name="Choudhury B."/>
            <person name="Clements J."/>
            <person name="Cole J."/>
            <person name="Dicks E."/>
            <person name="Forbes S."/>
            <person name="Gray K."/>
            <person name="Halliday K."/>
            <person name="Harrison R."/>
            <person name="Hills K."/>
            <person name="Hinton J."/>
            <person name="Jenkinson A."/>
            <person name="Jones D."/>
            <person name="Menzies A."/>
            <person name="Mironenko T."/>
            <person name="Perry J."/>
            <person name="Raine K."/>
            <person name="Richardson D."/>
            <person name="Shepherd R."/>
            <person name="Small A."/>
            <person name="Tofts C."/>
            <person name="Varian J."/>
            <person name="Webb T."/>
            <person name="West S."/>
            <person name="Widaa S."/>
            <person name="Yates A."/>
            <person name="Cahill D.P."/>
            <person name="Louis D.N."/>
            <person name="Goldstraw P."/>
            <person name="Nicholson A.G."/>
            <person name="Brasseur F."/>
            <person name="Looijenga L."/>
            <person name="Weber B.L."/>
            <person name="Chiew Y.-E."/>
            <person name="DeFazio A."/>
            <person name="Greaves M.F."/>
            <person name="Green A.R."/>
            <person name="Campbell P."/>
            <person name="Birney E."/>
            <person name="Easton D.F."/>
            <person name="Chenevix-Trench G."/>
            <person name="Tan M.-H."/>
            <person name="Khoo S.K."/>
            <person name="Teh B.T."/>
            <person name="Yuen S.T."/>
            <person name="Leung S.Y."/>
            <person name="Wooster R."/>
            <person name="Futreal P.A."/>
            <person name="Stratton M.R."/>
        </authorList>
    </citation>
    <scope>VARIANTS [LARGE SCALE ANALYSIS] CYS-233; THR-355; MET-530; LEU-578 AND GLY-691</scope>
</reference>
<gene>
    <name evidence="25" type="primary">MARK1</name>
    <name evidence="23" type="synonym">KIAA1477</name>
    <name evidence="22" type="synonym">MARK</name>
</gene>
<accession>Q9P0L2</accession>
<accession>D3DTB0</accession>
<accession>D3DTB1</accession>
<accession>Q2HIY1</accession>
<accession>Q5VTF9</accession>
<accession>Q5VTG0</accession>
<accession>Q96SW9</accession>
<accession>Q9P251</accession>
<dbReference type="EC" id="2.7.11.1"/>
<dbReference type="EC" id="2.7.11.26"/>
<dbReference type="EMBL" id="AF154845">
    <property type="protein sequence ID" value="AAF72103.1"/>
    <property type="molecule type" value="mRNA"/>
</dbReference>
<dbReference type="EMBL" id="AB040910">
    <property type="protein sequence ID" value="BAA96001.1"/>
    <property type="status" value="ALT_INIT"/>
    <property type="molecule type" value="mRNA"/>
</dbReference>
<dbReference type="EMBL" id="AK027493">
    <property type="protein sequence ID" value="BAB55152.1"/>
    <property type="status" value="ALT_FRAME"/>
    <property type="molecule type" value="mRNA"/>
</dbReference>
<dbReference type="EMBL" id="AC096640">
    <property type="status" value="NOT_ANNOTATED_CDS"/>
    <property type="molecule type" value="Genomic_DNA"/>
</dbReference>
<dbReference type="EMBL" id="AL592406">
    <property type="status" value="NOT_ANNOTATED_CDS"/>
    <property type="molecule type" value="Genomic_DNA"/>
</dbReference>
<dbReference type="EMBL" id="CH471100">
    <property type="protein sequence ID" value="EAW93299.1"/>
    <property type="molecule type" value="Genomic_DNA"/>
</dbReference>
<dbReference type="EMBL" id="CH471100">
    <property type="protein sequence ID" value="EAW93300.1"/>
    <property type="molecule type" value="Genomic_DNA"/>
</dbReference>
<dbReference type="EMBL" id="CH471100">
    <property type="protein sequence ID" value="EAW93302.1"/>
    <property type="molecule type" value="Genomic_DNA"/>
</dbReference>
<dbReference type="EMBL" id="BC113869">
    <property type="protein sequence ID" value="AAI13870.1"/>
    <property type="molecule type" value="mRNA"/>
</dbReference>
<dbReference type="EMBL" id="BC114478">
    <property type="protein sequence ID" value="AAI14479.1"/>
    <property type="molecule type" value="mRNA"/>
</dbReference>
<dbReference type="CCDS" id="CCDS31029.2">
    <molecule id="Q9P0L2-1"/>
</dbReference>
<dbReference type="CCDS" id="CCDS65789.1">
    <molecule id="Q9P0L2-3"/>
</dbReference>
<dbReference type="RefSeq" id="NP_001273057.1">
    <molecule id="Q9P0L2-3"/>
    <property type="nucleotide sequence ID" value="NM_001286128.2"/>
</dbReference>
<dbReference type="RefSeq" id="NP_061120.3">
    <molecule id="Q9P0L2-1"/>
    <property type="nucleotide sequence ID" value="NM_018650.4"/>
</dbReference>
<dbReference type="PDB" id="2HAK">
    <property type="method" value="X-ray"/>
    <property type="resolution" value="2.60 A"/>
    <property type="chains" value="A/B/C/D/E/F/G/H=45-371"/>
</dbReference>
<dbReference type="PDB" id="3OSE">
    <property type="method" value="X-ray"/>
    <property type="resolution" value="1.70 A"/>
    <property type="chains" value="A=683-795"/>
</dbReference>
<dbReference type="PDB" id="6C9D">
    <property type="method" value="X-ray"/>
    <property type="resolution" value="2.50 A"/>
    <property type="chains" value="A/B=45-795"/>
</dbReference>
<dbReference type="PDBsum" id="2HAK"/>
<dbReference type="PDBsum" id="3OSE"/>
<dbReference type="PDBsum" id="6C9D"/>
<dbReference type="SASBDB" id="Q9P0L2"/>
<dbReference type="SMR" id="Q9P0L2"/>
<dbReference type="BioGRID" id="110309">
    <property type="interactions" value="78"/>
</dbReference>
<dbReference type="DIP" id="DIP-39777N"/>
<dbReference type="FunCoup" id="Q9P0L2">
    <property type="interactions" value="1289"/>
</dbReference>
<dbReference type="IntAct" id="Q9P0L2">
    <property type="interactions" value="46"/>
</dbReference>
<dbReference type="MINT" id="Q9P0L2"/>
<dbReference type="STRING" id="9606.ENSP00000483424"/>
<dbReference type="BindingDB" id="Q9P0L2"/>
<dbReference type="ChEMBL" id="CHEMBL5940"/>
<dbReference type="DrugBank" id="DB12010">
    <property type="generic name" value="Fostamatinib"/>
</dbReference>
<dbReference type="DrugCentral" id="Q9P0L2"/>
<dbReference type="GuidetoPHARMACOLOGY" id="2097"/>
<dbReference type="CarbonylDB" id="Q9P0L2"/>
<dbReference type="iPTMnet" id="Q9P0L2"/>
<dbReference type="PhosphoSitePlus" id="Q9P0L2"/>
<dbReference type="BioMuta" id="MARK1"/>
<dbReference type="DMDM" id="124056494"/>
<dbReference type="jPOST" id="Q9P0L2"/>
<dbReference type="MassIVE" id="Q9P0L2"/>
<dbReference type="PaxDb" id="9606-ENSP00000483424"/>
<dbReference type="PeptideAtlas" id="Q9P0L2"/>
<dbReference type="ProteomicsDB" id="83571">
    <molecule id="Q9P0L2-1"/>
</dbReference>
<dbReference type="ProteomicsDB" id="83572">
    <molecule id="Q9P0L2-2"/>
</dbReference>
<dbReference type="ProteomicsDB" id="83573">
    <molecule id="Q9P0L2-3"/>
</dbReference>
<dbReference type="Pumba" id="Q9P0L2"/>
<dbReference type="Antibodypedia" id="2072">
    <property type="antibodies" value="432 antibodies from 33 providers"/>
</dbReference>
<dbReference type="DNASU" id="4139"/>
<dbReference type="Ensembl" id="ENST00000366917.6">
    <molecule id="Q9P0L2-1"/>
    <property type="protein sequence ID" value="ENSP00000355884.5"/>
    <property type="gene ID" value="ENSG00000116141.17"/>
</dbReference>
<dbReference type="Ensembl" id="ENST00000366918.8">
    <molecule id="Q9P0L2-3"/>
    <property type="protein sequence ID" value="ENSP00000355885.4"/>
    <property type="gene ID" value="ENSG00000116141.17"/>
</dbReference>
<dbReference type="GeneID" id="4139"/>
<dbReference type="KEGG" id="hsa:4139"/>
<dbReference type="MANE-Select" id="ENST00000366917.6">
    <property type="protein sequence ID" value="ENSP00000355884.5"/>
    <property type="RefSeq nucleotide sequence ID" value="NM_018650.5"/>
    <property type="RefSeq protein sequence ID" value="NP_061120.3"/>
</dbReference>
<dbReference type="UCSC" id="uc001hmm.6">
    <molecule id="Q9P0L2-1"/>
    <property type="organism name" value="human"/>
</dbReference>
<dbReference type="AGR" id="HGNC:6896"/>
<dbReference type="CTD" id="4139"/>
<dbReference type="DisGeNET" id="4139"/>
<dbReference type="GeneCards" id="MARK1"/>
<dbReference type="HGNC" id="HGNC:6896">
    <property type="gene designation" value="MARK1"/>
</dbReference>
<dbReference type="HPA" id="ENSG00000116141">
    <property type="expression patterns" value="Low tissue specificity"/>
</dbReference>
<dbReference type="MIM" id="606511">
    <property type="type" value="gene"/>
</dbReference>
<dbReference type="neXtProt" id="NX_Q9P0L2"/>
<dbReference type="OpenTargets" id="ENSG00000116141"/>
<dbReference type="PharmGKB" id="PA30639"/>
<dbReference type="VEuPathDB" id="HostDB:ENSG00000116141"/>
<dbReference type="eggNOG" id="KOG0586">
    <property type="taxonomic scope" value="Eukaryota"/>
</dbReference>
<dbReference type="GeneTree" id="ENSGT00940000157560"/>
<dbReference type="InParanoid" id="Q9P0L2"/>
<dbReference type="OrthoDB" id="193931at2759"/>
<dbReference type="PAN-GO" id="Q9P0L2">
    <property type="GO annotations" value="5 GO annotations based on evolutionary models"/>
</dbReference>
<dbReference type="PhylomeDB" id="Q9P0L2"/>
<dbReference type="TreeFam" id="TF315213"/>
<dbReference type="PathwayCommons" id="Q9P0L2"/>
<dbReference type="SignaLink" id="Q9P0L2"/>
<dbReference type="SIGNOR" id="Q9P0L2"/>
<dbReference type="BioGRID-ORCS" id="4139">
    <property type="hits" value="14 hits in 1190 CRISPR screens"/>
</dbReference>
<dbReference type="CD-CODE" id="FB4E32DD">
    <property type="entry name" value="Presynaptic clusters and postsynaptic densities"/>
</dbReference>
<dbReference type="ChiTaRS" id="MARK1">
    <property type="organism name" value="human"/>
</dbReference>
<dbReference type="EvolutionaryTrace" id="Q9P0L2"/>
<dbReference type="GeneWiki" id="MARK1"/>
<dbReference type="GenomeRNAi" id="4139"/>
<dbReference type="Pharos" id="Q9P0L2">
    <property type="development level" value="Tchem"/>
</dbReference>
<dbReference type="PRO" id="PR:Q9P0L2"/>
<dbReference type="Proteomes" id="UP000005640">
    <property type="component" value="Chromosome 1"/>
</dbReference>
<dbReference type="RNAct" id="Q9P0L2">
    <property type="molecule type" value="protein"/>
</dbReference>
<dbReference type="Bgee" id="ENSG00000116141">
    <property type="expression patterns" value="Expressed in cortical plate and 178 other cell types or tissues"/>
</dbReference>
<dbReference type="ExpressionAtlas" id="Q9P0L2">
    <property type="expression patterns" value="baseline and differential"/>
</dbReference>
<dbReference type="GO" id="GO:0005737">
    <property type="term" value="C:cytoplasm"/>
    <property type="evidence" value="ECO:0000314"/>
    <property type="project" value="UniProtKB"/>
</dbReference>
<dbReference type="GO" id="GO:0005856">
    <property type="term" value="C:cytoskeleton"/>
    <property type="evidence" value="ECO:0000250"/>
    <property type="project" value="UniProtKB"/>
</dbReference>
<dbReference type="GO" id="GO:0030425">
    <property type="term" value="C:dendrite"/>
    <property type="evidence" value="ECO:0000314"/>
    <property type="project" value="UniProtKB"/>
</dbReference>
<dbReference type="GO" id="GO:0098978">
    <property type="term" value="C:glutamatergic synapse"/>
    <property type="evidence" value="ECO:0007669"/>
    <property type="project" value="Ensembl"/>
</dbReference>
<dbReference type="GO" id="GO:0015630">
    <property type="term" value="C:microtubule cytoskeleton"/>
    <property type="evidence" value="ECO:0000304"/>
    <property type="project" value="ProtInc"/>
</dbReference>
<dbReference type="GO" id="GO:0005886">
    <property type="term" value="C:plasma membrane"/>
    <property type="evidence" value="ECO:0000314"/>
    <property type="project" value="UniProtKB"/>
</dbReference>
<dbReference type="GO" id="GO:0098794">
    <property type="term" value="C:postsynapse"/>
    <property type="evidence" value="ECO:0007669"/>
    <property type="project" value="Ensembl"/>
</dbReference>
<dbReference type="GO" id="GO:0005524">
    <property type="term" value="F:ATP binding"/>
    <property type="evidence" value="ECO:0000314"/>
    <property type="project" value="UniProtKB"/>
</dbReference>
<dbReference type="GO" id="GO:0000287">
    <property type="term" value="F:magnesium ion binding"/>
    <property type="evidence" value="ECO:0000314"/>
    <property type="project" value="UniProtKB"/>
</dbReference>
<dbReference type="GO" id="GO:0070300">
    <property type="term" value="F:phosphatidic acid binding"/>
    <property type="evidence" value="ECO:0000314"/>
    <property type="project" value="UniProtKB"/>
</dbReference>
<dbReference type="GO" id="GO:0005546">
    <property type="term" value="F:phosphatidylinositol-4,5-bisphosphate binding"/>
    <property type="evidence" value="ECO:0000314"/>
    <property type="project" value="UniProtKB"/>
</dbReference>
<dbReference type="GO" id="GO:0001786">
    <property type="term" value="F:phosphatidylserine binding"/>
    <property type="evidence" value="ECO:0000314"/>
    <property type="project" value="UniProtKB"/>
</dbReference>
<dbReference type="GO" id="GO:0106310">
    <property type="term" value="F:protein serine kinase activity"/>
    <property type="evidence" value="ECO:0007669"/>
    <property type="project" value="RHEA"/>
</dbReference>
<dbReference type="GO" id="GO:0004674">
    <property type="term" value="F:protein serine/threonine kinase activity"/>
    <property type="evidence" value="ECO:0000314"/>
    <property type="project" value="UniProtKB"/>
</dbReference>
<dbReference type="GO" id="GO:0048156">
    <property type="term" value="F:tau protein binding"/>
    <property type="evidence" value="ECO:0000303"/>
    <property type="project" value="ARUK-UCL"/>
</dbReference>
<dbReference type="GO" id="GO:0050321">
    <property type="term" value="F:tau-protein kinase activity"/>
    <property type="evidence" value="ECO:0000315"/>
    <property type="project" value="UniProtKB"/>
</dbReference>
<dbReference type="GO" id="GO:0007010">
    <property type="term" value="P:cytoskeleton organization"/>
    <property type="evidence" value="ECO:0000250"/>
    <property type="project" value="UniProtKB"/>
</dbReference>
<dbReference type="GO" id="GO:0051654">
    <property type="term" value="P:establishment of mitochondrion localization"/>
    <property type="evidence" value="ECO:0000250"/>
    <property type="project" value="ARUK-UCL"/>
</dbReference>
<dbReference type="GO" id="GO:0035556">
    <property type="term" value="P:intracellular signal transduction"/>
    <property type="evidence" value="ECO:0000314"/>
    <property type="project" value="UniProtKB"/>
</dbReference>
<dbReference type="GO" id="GO:0000226">
    <property type="term" value="P:microtubule cytoskeleton organization"/>
    <property type="evidence" value="ECO:0000250"/>
    <property type="project" value="ARUK-UCL"/>
</dbReference>
<dbReference type="GO" id="GO:0010719">
    <property type="term" value="P:negative regulation of epithelial to mesenchymal transition"/>
    <property type="evidence" value="ECO:0000314"/>
    <property type="project" value="ARUK-UCL"/>
</dbReference>
<dbReference type="GO" id="GO:0010629">
    <property type="term" value="P:negative regulation of gene expression"/>
    <property type="evidence" value="ECO:0000314"/>
    <property type="project" value="ARUK-UCL"/>
</dbReference>
<dbReference type="GO" id="GO:0001764">
    <property type="term" value="P:neuron migration"/>
    <property type="evidence" value="ECO:0000250"/>
    <property type="project" value="UniProtKB"/>
</dbReference>
<dbReference type="GO" id="GO:0010628">
    <property type="term" value="P:positive regulation of gene expression"/>
    <property type="evidence" value="ECO:0000314"/>
    <property type="project" value="ARUK-UCL"/>
</dbReference>
<dbReference type="GO" id="GO:0006468">
    <property type="term" value="P:protein phosphorylation"/>
    <property type="evidence" value="ECO:0000314"/>
    <property type="project" value="UniProtKB"/>
</dbReference>
<dbReference type="GO" id="GO:0050773">
    <property type="term" value="P:regulation of dendrite development"/>
    <property type="evidence" value="ECO:0000250"/>
    <property type="project" value="ARUK-UCL"/>
</dbReference>
<dbReference type="GO" id="GO:0010975">
    <property type="term" value="P:regulation of neuron projection development"/>
    <property type="evidence" value="ECO:0000250"/>
    <property type="project" value="ARUK-UCL"/>
</dbReference>
<dbReference type="GO" id="GO:0150052">
    <property type="term" value="P:regulation of postsynapse assembly"/>
    <property type="evidence" value="ECO:0007669"/>
    <property type="project" value="Ensembl"/>
</dbReference>
<dbReference type="GO" id="GO:0016055">
    <property type="term" value="P:Wnt signaling pathway"/>
    <property type="evidence" value="ECO:0007669"/>
    <property type="project" value="UniProtKB-KW"/>
</dbReference>
<dbReference type="CDD" id="cd12196">
    <property type="entry name" value="MARK1-3_C"/>
    <property type="match status" value="1"/>
</dbReference>
<dbReference type="CDD" id="cd14072">
    <property type="entry name" value="STKc_MARK"/>
    <property type="match status" value="1"/>
</dbReference>
<dbReference type="CDD" id="cd14405">
    <property type="entry name" value="UBA_MARK1"/>
    <property type="match status" value="1"/>
</dbReference>
<dbReference type="FunFam" id="1.10.510.10:FF:001032">
    <property type="entry name" value="KP78b, isoform A"/>
    <property type="match status" value="1"/>
</dbReference>
<dbReference type="FunFam" id="1.10.8.10:FF:000011">
    <property type="entry name" value="Non-specific serine/threonine protein kinase"/>
    <property type="match status" value="1"/>
</dbReference>
<dbReference type="FunFam" id="3.30.200.20:FF:000003">
    <property type="entry name" value="Non-specific serine/threonine protein kinase"/>
    <property type="match status" value="1"/>
</dbReference>
<dbReference type="FunFam" id="3.30.310.80:FF:000001">
    <property type="entry name" value="Non-specific serine/threonine protein kinase"/>
    <property type="match status" value="1"/>
</dbReference>
<dbReference type="Gene3D" id="1.10.8.10">
    <property type="entry name" value="DNA helicase RuvA subunit, C-terminal domain"/>
    <property type="match status" value="1"/>
</dbReference>
<dbReference type="Gene3D" id="3.30.310.80">
    <property type="entry name" value="Kinase associated domain 1, KA1"/>
    <property type="match status" value="1"/>
</dbReference>
<dbReference type="Gene3D" id="3.30.200.20">
    <property type="entry name" value="Phosphorylase Kinase, domain 1"/>
    <property type="match status" value="1"/>
</dbReference>
<dbReference type="Gene3D" id="1.10.510.10">
    <property type="entry name" value="Transferase(Phosphotransferase) domain 1"/>
    <property type="match status" value="1"/>
</dbReference>
<dbReference type="InterPro" id="IPR028375">
    <property type="entry name" value="KA1/Ssp2_C"/>
</dbReference>
<dbReference type="InterPro" id="IPR001772">
    <property type="entry name" value="KA1_dom"/>
</dbReference>
<dbReference type="InterPro" id="IPR011009">
    <property type="entry name" value="Kinase-like_dom_sf"/>
</dbReference>
<dbReference type="InterPro" id="IPR049508">
    <property type="entry name" value="MARK1-4_cat"/>
</dbReference>
<dbReference type="InterPro" id="IPR000719">
    <property type="entry name" value="Prot_kinase_dom"/>
</dbReference>
<dbReference type="InterPro" id="IPR017441">
    <property type="entry name" value="Protein_kinase_ATP_BS"/>
</dbReference>
<dbReference type="InterPro" id="IPR008271">
    <property type="entry name" value="Ser/Thr_kinase_AS"/>
</dbReference>
<dbReference type="InterPro" id="IPR015940">
    <property type="entry name" value="UBA"/>
</dbReference>
<dbReference type="PANTHER" id="PTHR24346">
    <property type="entry name" value="MAP/MICROTUBULE AFFINITY-REGULATING KINASE"/>
    <property type="match status" value="1"/>
</dbReference>
<dbReference type="PANTHER" id="PTHR24346:SF21">
    <property type="entry name" value="SERINE_THREONINE-PROTEIN KINASE MARK1"/>
    <property type="match status" value="1"/>
</dbReference>
<dbReference type="Pfam" id="PF02149">
    <property type="entry name" value="KA1"/>
    <property type="match status" value="1"/>
</dbReference>
<dbReference type="Pfam" id="PF00069">
    <property type="entry name" value="Pkinase"/>
    <property type="match status" value="1"/>
</dbReference>
<dbReference type="Pfam" id="PF00627">
    <property type="entry name" value="UBA"/>
    <property type="match status" value="1"/>
</dbReference>
<dbReference type="SMART" id="SM00220">
    <property type="entry name" value="S_TKc"/>
    <property type="match status" value="1"/>
</dbReference>
<dbReference type="SMART" id="SM00165">
    <property type="entry name" value="UBA"/>
    <property type="match status" value="1"/>
</dbReference>
<dbReference type="SUPFAM" id="SSF103243">
    <property type="entry name" value="KA1-like"/>
    <property type="match status" value="1"/>
</dbReference>
<dbReference type="SUPFAM" id="SSF56112">
    <property type="entry name" value="Protein kinase-like (PK-like)"/>
    <property type="match status" value="1"/>
</dbReference>
<dbReference type="PROSITE" id="PS50032">
    <property type="entry name" value="KA1"/>
    <property type="match status" value="1"/>
</dbReference>
<dbReference type="PROSITE" id="PS00107">
    <property type="entry name" value="PROTEIN_KINASE_ATP"/>
    <property type="match status" value="1"/>
</dbReference>
<dbReference type="PROSITE" id="PS50011">
    <property type="entry name" value="PROTEIN_KINASE_DOM"/>
    <property type="match status" value="1"/>
</dbReference>
<dbReference type="PROSITE" id="PS00108">
    <property type="entry name" value="PROTEIN_KINASE_ST"/>
    <property type="match status" value="1"/>
</dbReference>
<dbReference type="PROSITE" id="PS50030">
    <property type="entry name" value="UBA"/>
    <property type="match status" value="1"/>
</dbReference>
<feature type="chain" id="PRO_0000086298" description="Serine/threonine-protein kinase MARK1">
    <location>
        <begin position="1"/>
        <end position="795"/>
    </location>
</feature>
<feature type="domain" description="Protein kinase" evidence="5">
    <location>
        <begin position="60"/>
        <end position="311"/>
    </location>
</feature>
<feature type="domain" description="UBA" evidence="6">
    <location>
        <begin position="325"/>
        <end position="370"/>
    </location>
</feature>
<feature type="domain" description="KA1" evidence="7">
    <location>
        <begin position="746"/>
        <end position="795"/>
    </location>
</feature>
<feature type="region of interest" description="Disordered" evidence="9">
    <location>
        <begin position="1"/>
        <end position="40"/>
    </location>
</feature>
<feature type="region of interest" description="Disordered" evidence="9">
    <location>
        <begin position="377"/>
        <end position="495"/>
    </location>
</feature>
<feature type="region of interest" description="Disordered" evidence="9">
    <location>
        <begin position="539"/>
        <end position="700"/>
    </location>
</feature>
<feature type="compositionally biased region" description="Polar residues" evidence="9">
    <location>
        <begin position="31"/>
        <end position="40"/>
    </location>
</feature>
<feature type="compositionally biased region" description="Polar residues" evidence="9">
    <location>
        <begin position="380"/>
        <end position="403"/>
    </location>
</feature>
<feature type="compositionally biased region" description="Basic and acidic residues" evidence="9">
    <location>
        <begin position="447"/>
        <end position="459"/>
    </location>
</feature>
<feature type="compositionally biased region" description="Polar residues" evidence="9">
    <location>
        <begin position="462"/>
        <end position="473"/>
    </location>
</feature>
<feature type="compositionally biased region" description="Polar residues" evidence="9">
    <location>
        <begin position="486"/>
        <end position="495"/>
    </location>
</feature>
<feature type="compositionally biased region" description="Polar residues" evidence="9">
    <location>
        <begin position="590"/>
        <end position="599"/>
    </location>
</feature>
<feature type="compositionally biased region" description="Polar residues" evidence="9">
    <location>
        <begin position="647"/>
        <end position="657"/>
    </location>
</feature>
<feature type="compositionally biased region" description="Basic and acidic residues" evidence="9">
    <location>
        <begin position="661"/>
        <end position="676"/>
    </location>
</feature>
<feature type="compositionally biased region" description="Basic and acidic residues" evidence="9">
    <location>
        <begin position="683"/>
        <end position="697"/>
    </location>
</feature>
<feature type="active site" description="Proton acceptor" evidence="4 5 8">
    <location>
        <position position="182"/>
    </location>
</feature>
<feature type="binding site" evidence="4 5">
    <location>
        <begin position="66"/>
        <end position="74"/>
    </location>
    <ligand>
        <name>ATP</name>
        <dbReference type="ChEBI" id="CHEBI:30616"/>
    </ligand>
</feature>
<feature type="binding site" evidence="2 5">
    <location>
        <position position="89"/>
    </location>
    <ligand>
        <name>ATP</name>
        <dbReference type="ChEBI" id="CHEBI:30616"/>
    </ligand>
</feature>
<feature type="modified residue" description="Phosphothreonine" evidence="27">
    <location>
        <position position="5"/>
    </location>
</feature>
<feature type="modified residue" description="Phosphothreonine" evidence="14">
    <location>
        <position position="208"/>
    </location>
</feature>
<feature type="modified residue" description="Phosphothreonine; by LKB1 and TAOK1" evidence="12">
    <location>
        <position position="215"/>
    </location>
</feature>
<feature type="modified residue" description="Phosphoserine; by GSK3-beta" evidence="2">
    <location>
        <position position="219"/>
    </location>
</feature>
<feature type="modified residue" description="Phosphoserine" evidence="3">
    <location>
        <position position="382"/>
    </location>
</feature>
<feature type="modified residue" description="Phosphoserine" evidence="3">
    <location>
        <position position="390"/>
    </location>
</feature>
<feature type="modified residue" description="Phosphoserine" evidence="3">
    <location>
        <position position="393"/>
    </location>
</feature>
<feature type="modified residue" description="Phosphoserine" evidence="27">
    <location>
        <position position="403"/>
    </location>
</feature>
<feature type="modified residue" description="Phosphoserine" evidence="3">
    <location>
        <position position="423"/>
    </location>
</feature>
<feature type="modified residue" description="Phosphoserine" evidence="2">
    <location>
        <position position="444"/>
    </location>
</feature>
<feature type="modified residue" description="Phosphoserine" evidence="3">
    <location>
        <position position="475"/>
    </location>
</feature>
<feature type="modified residue" description="Phosphoserine" evidence="26">
    <location>
        <position position="588"/>
    </location>
</feature>
<feature type="modified residue" description="Phosphothreonine; by PKC/PRKCZ" evidence="1">
    <location>
        <position position="613"/>
    </location>
</feature>
<feature type="modified residue" description="Phosphoserine" evidence="3">
    <location>
        <position position="666"/>
    </location>
</feature>
<feature type="splice variant" id="VSP_051702" description="In isoform 2." evidence="19">
    <location>
        <begin position="1"/>
        <end position="135"/>
    </location>
</feature>
<feature type="splice variant" id="VSP_051703" description="In isoform 3." evidence="18">
    <location>
        <begin position="120"/>
        <end position="141"/>
    </location>
</feature>
<feature type="splice variant" id="VSP_051704" description="In isoform 2 and isoform 3." evidence="18 19">
    <location>
        <begin position="663"/>
        <end position="677"/>
    </location>
</feature>
<feature type="sequence variant" id="VAR_040760" description="In a gastric adenocarcinoma sample; somatic mutation." evidence="13">
    <original>Y</original>
    <variation>C</variation>
    <location>
        <position position="233"/>
    </location>
</feature>
<feature type="sequence variant" id="VAR_040761" description="In an ovarian serous carcinoma sample; somatic mutation." evidence="13">
    <original>N</original>
    <variation>T</variation>
    <location>
        <position position="355"/>
    </location>
</feature>
<feature type="sequence variant" id="VAR_040762" description="In dbSNP:rs56212551." evidence="13">
    <original>V</original>
    <variation>M</variation>
    <location>
        <position position="530"/>
    </location>
</feature>
<feature type="sequence variant" id="VAR_040763" description="In dbSNP:rs55691439." evidence="13">
    <original>P</original>
    <variation>L</variation>
    <location>
        <position position="578"/>
    </location>
</feature>
<feature type="sequence variant" id="VAR_030018" description="In dbSNP:rs12123778.">
    <original>R</original>
    <variation>G</variation>
    <location>
        <position position="645"/>
    </location>
</feature>
<feature type="sequence variant" id="VAR_040764" description="In dbSNP:rs55688276." evidence="13">
    <original>E</original>
    <variation>G</variation>
    <location>
        <position position="691"/>
    </location>
</feature>
<feature type="mutagenesis site" description="Prevents phosphorylation and activation by STK11/LKB1 complex." evidence="12">
    <original>T</original>
    <variation>A</variation>
    <location>
        <position position="215"/>
    </location>
</feature>
<feature type="mutagenesis site" description="Constitutively active." evidence="12">
    <original>T</original>
    <variation>E</variation>
    <location>
        <position position="215"/>
    </location>
</feature>
<feature type="mutagenesis site" description="Impairs phospholipid-binding, targeting to membrane and vesicle-binding; when associated with S-701." evidence="15">
    <original>R</original>
    <variation>S</variation>
    <location>
        <position position="698"/>
    </location>
</feature>
<feature type="mutagenesis site" description="Impairs phospholipid-binding, targeting to membrane and vesicle-binding; when associated with S-698." evidence="15">
    <original>R</original>
    <variation>S</variation>
    <location>
        <position position="701"/>
    </location>
</feature>
<feature type="mutagenesis site" description="Impairs phospholipid-binding." evidence="15">
    <original>RFK</original>
    <variation>AFA</variation>
    <location>
        <begin position="771"/>
        <end position="773"/>
    </location>
</feature>
<feature type="sequence conflict" description="In Ref. 2; AAF72103." evidence="20" ref="2">
    <original>E</original>
    <variation>V</variation>
    <location>
        <position position="16"/>
    </location>
</feature>
<feature type="sequence conflict" description="In Ref. 2; AAF72103." evidence="20" ref="2">
    <original>S</original>
    <variation>T</variation>
    <location>
        <position position="20"/>
    </location>
</feature>
<feature type="sequence conflict" description="In Ref. 4; BAB55152." evidence="20" ref="4">
    <original>D</original>
    <variation>N</variation>
    <location>
        <position position="522"/>
    </location>
</feature>
<feature type="sequence conflict" description="In Ref. 4; BAB55152." evidence="20" ref="4">
    <original>V</original>
    <variation>A</variation>
    <location>
        <position position="544"/>
    </location>
</feature>
<feature type="sequence conflict" description="In Ref. 4; BAB55152." evidence="20" ref="4">
    <original>P</original>
    <variation>A</variation>
    <location>
        <position position="763"/>
    </location>
</feature>
<feature type="sequence conflict" description="In Ref. 3; BAA96001." evidence="20" ref="3">
    <original>K</original>
    <variation>M</variation>
    <location>
        <position position="794"/>
    </location>
</feature>
<feature type="strand" evidence="29">
    <location>
        <begin position="55"/>
        <end position="57"/>
    </location>
</feature>
<feature type="strand" evidence="29">
    <location>
        <begin position="60"/>
        <end position="68"/>
    </location>
</feature>
<feature type="strand" evidence="29">
    <location>
        <begin position="70"/>
        <end position="79"/>
    </location>
</feature>
<feature type="turn" evidence="29">
    <location>
        <begin position="80"/>
        <end position="82"/>
    </location>
</feature>
<feature type="strand" evidence="29">
    <location>
        <begin position="85"/>
        <end position="92"/>
    </location>
</feature>
<feature type="helix" evidence="29">
    <location>
        <begin position="93"/>
        <end position="95"/>
    </location>
</feature>
<feature type="helix" evidence="29">
    <location>
        <begin position="98"/>
        <end position="111"/>
    </location>
</feature>
<feature type="strand" evidence="29">
    <location>
        <begin position="122"/>
        <end position="127"/>
    </location>
</feature>
<feature type="strand" evidence="29">
    <location>
        <begin position="129"/>
        <end position="136"/>
    </location>
</feature>
<feature type="helix" evidence="29">
    <location>
        <begin position="146"/>
        <end position="151"/>
    </location>
</feature>
<feature type="helix" evidence="29">
    <location>
        <begin position="156"/>
        <end position="175"/>
    </location>
</feature>
<feature type="helix" evidence="29">
    <location>
        <begin position="185"/>
        <end position="187"/>
    </location>
</feature>
<feature type="strand" evidence="29">
    <location>
        <begin position="188"/>
        <end position="190"/>
    </location>
</feature>
<feature type="strand" evidence="29">
    <location>
        <begin position="196"/>
        <end position="198"/>
    </location>
</feature>
<feature type="helix" evidence="29">
    <location>
        <begin position="201"/>
        <end position="203"/>
    </location>
</feature>
<feature type="helix" evidence="29">
    <location>
        <begin position="220"/>
        <end position="222"/>
    </location>
</feature>
<feature type="helix" evidence="29">
    <location>
        <begin position="225"/>
        <end position="228"/>
    </location>
</feature>
<feature type="helix" evidence="29">
    <location>
        <begin position="236"/>
        <end position="252"/>
    </location>
</feature>
<feature type="helix" evidence="29">
    <location>
        <begin position="262"/>
        <end position="271"/>
    </location>
</feature>
<feature type="helix" evidence="29">
    <location>
        <begin position="282"/>
        <end position="291"/>
    </location>
</feature>
<feature type="turn" evidence="29">
    <location>
        <begin position="296"/>
        <end position="298"/>
    </location>
</feature>
<feature type="helix" evidence="29">
    <location>
        <begin position="302"/>
        <end position="305"/>
    </location>
</feature>
<feature type="helix" evidence="29">
    <location>
        <begin position="309"/>
        <end position="312"/>
    </location>
</feature>
<feature type="strand" evidence="29">
    <location>
        <begin position="316"/>
        <end position="318"/>
    </location>
</feature>
<feature type="helix" evidence="29">
    <location>
        <begin position="333"/>
        <end position="341"/>
    </location>
</feature>
<feature type="helix" evidence="29">
    <location>
        <begin position="346"/>
        <end position="355"/>
    </location>
</feature>
<feature type="helix" evidence="29">
    <location>
        <begin position="360"/>
        <end position="368"/>
    </location>
</feature>
<feature type="turn" evidence="29">
    <location>
        <begin position="706"/>
        <end position="708"/>
    </location>
</feature>
<feature type="helix" evidence="28">
    <location>
        <begin position="714"/>
        <end position="727"/>
    </location>
</feature>
<feature type="strand" evidence="28">
    <location>
        <begin position="731"/>
        <end position="736"/>
    </location>
</feature>
<feature type="strand" evidence="28">
    <location>
        <begin position="739"/>
        <end position="745"/>
    </location>
</feature>
<feature type="turn" evidence="28">
    <location>
        <begin position="747"/>
        <end position="750"/>
    </location>
</feature>
<feature type="strand" evidence="28">
    <location>
        <begin position="753"/>
        <end position="762"/>
    </location>
</feature>
<feature type="helix" evidence="28">
    <location>
        <begin position="763"/>
        <end position="765"/>
    </location>
</feature>
<feature type="strand" evidence="28">
    <location>
        <begin position="767"/>
        <end position="777"/>
    </location>
</feature>
<feature type="helix" evidence="28">
    <location>
        <begin position="779"/>
        <end position="792"/>
    </location>
</feature>
<proteinExistence type="evidence at protein level"/>
<organism>
    <name type="scientific">Homo sapiens</name>
    <name type="common">Human</name>
    <dbReference type="NCBI Taxonomy" id="9606"/>
    <lineage>
        <taxon>Eukaryota</taxon>
        <taxon>Metazoa</taxon>
        <taxon>Chordata</taxon>
        <taxon>Craniata</taxon>
        <taxon>Vertebrata</taxon>
        <taxon>Euteleostomi</taxon>
        <taxon>Mammalia</taxon>
        <taxon>Eutheria</taxon>
        <taxon>Euarchontoglires</taxon>
        <taxon>Primates</taxon>
        <taxon>Haplorrhini</taxon>
        <taxon>Catarrhini</taxon>
        <taxon>Hominidae</taxon>
        <taxon>Homo</taxon>
    </lineage>
</organism>
<protein>
    <recommendedName>
        <fullName>Serine/threonine-protein kinase MARK1</fullName>
        <ecNumber>2.7.11.1</ecNumber>
        <ecNumber>2.7.11.26</ecNumber>
    </recommendedName>
    <alternativeName>
        <fullName>MAP/microtubule affinity-regulating kinase 1</fullName>
    </alternativeName>
    <alternativeName>
        <fullName>PAR1 homolog c</fullName>
        <shortName>Par-1c</shortName>
        <shortName>Par1c</shortName>
    </alternativeName>
</protein>
<sequence>MSARTPLPTVNERDTENHTSVDGYTEPHIQPTKSSSRQNIPRCRNSITSATDEQPHIGNYRLQKTIGKGNFAKVKLARHVLTGREVAVKIIDKTQLNPTSLQKLFREVRIMKILNHPNIVKLFEVIETEKTLYLVMEYASGGEVFDYLVAHGRMKEKEARAKFRQIVSAVQYCHQKYIVHRDLKAENLLLDGDMNIKIADFGFSNEFTVGNKLDTFCGSPPYAAPELFQGKKYDGPEVDVWSLGVILYTLVSGSLPFDGQNLKELRERVLRGKYRIPFYMSTDCENLLKKLLVLNPIKRGSLEQIMKDRWMNVGHEEEELKPYTEPDPDFNDTKRIDIMVTMGFARDEINDALINQKYDEVMATYILLGRKPPEFEGGESLSSGNLCQRSRPSSDLNNSTLQSPAHLKVQRSISANQKQRRFSDHAGPSIPPAVSYTKRPQANSVESEQKEEWDKDVARKLGSTTVGSKSEMTASPLVGPERKKSSTIPSNNVYSGGSMARRNTYVCERTTDRYVALQNGKDSSLTEMSVSSISSAGSSVASAVPSARPRHQKSMSTSGHPIKVTLPTIKDGSEAYRPGTTQRVPAASPSAHSISTATPDRTRFPRGSSSRSTFHGEQLRERRSVAYNGPPASPSHETGAFAHARRGTSTGIISKITSKFVRRDPSEGEASGRTDTSRSTSGEPKERDKEEGKDSKPRSLRFTWSMKTTSSMDPNDMMREIRKVLDANNCDYEQKERFLLFCVHGDARQDSLVQWEMEVCKLPRLSLNGVRFKRISGTSIAFKNIASKIANELKL</sequence>
<evidence type="ECO:0000250" key="1"/>
<evidence type="ECO:0000250" key="2">
    <source>
        <dbReference type="UniProtKB" id="O08678"/>
    </source>
</evidence>
<evidence type="ECO:0000250" key="3">
    <source>
        <dbReference type="UniProtKB" id="Q8VHJ5"/>
    </source>
</evidence>
<evidence type="ECO:0000250" key="4">
    <source>
        <dbReference type="UniProtKB" id="Q9H0K1"/>
    </source>
</evidence>
<evidence type="ECO:0000255" key="5">
    <source>
        <dbReference type="PROSITE-ProRule" id="PRU00159"/>
    </source>
</evidence>
<evidence type="ECO:0000255" key="6">
    <source>
        <dbReference type="PROSITE-ProRule" id="PRU00212"/>
    </source>
</evidence>
<evidence type="ECO:0000255" key="7">
    <source>
        <dbReference type="PROSITE-ProRule" id="PRU00565"/>
    </source>
</evidence>
<evidence type="ECO:0000255" key="8">
    <source>
        <dbReference type="PROSITE-ProRule" id="PRU10027"/>
    </source>
</evidence>
<evidence type="ECO:0000256" key="9">
    <source>
        <dbReference type="SAM" id="MobiDB-lite"/>
    </source>
</evidence>
<evidence type="ECO:0000269" key="10">
    <source>
    </source>
</evidence>
<evidence type="ECO:0000269" key="11">
    <source>
    </source>
</evidence>
<evidence type="ECO:0000269" key="12">
    <source>
    </source>
</evidence>
<evidence type="ECO:0000269" key="13">
    <source>
    </source>
</evidence>
<evidence type="ECO:0000269" key="14">
    <source>
    </source>
</evidence>
<evidence type="ECO:0000269" key="15">
    <source>
    </source>
</evidence>
<evidence type="ECO:0000269" key="16">
    <source>
    </source>
</evidence>
<evidence type="ECO:0000269" key="17">
    <source>
    </source>
</evidence>
<evidence type="ECO:0000303" key="18">
    <source>
    </source>
</evidence>
<evidence type="ECO:0000303" key="19">
    <source>
    </source>
</evidence>
<evidence type="ECO:0000305" key="20"/>
<evidence type="ECO:0000305" key="21">
    <source>
    </source>
</evidence>
<evidence type="ECO:0000312" key="22">
    <source>
        <dbReference type="EMBL" id="AAF72103.1"/>
    </source>
</evidence>
<evidence type="ECO:0000312" key="23">
    <source>
        <dbReference type="EMBL" id="BAA96001.1"/>
    </source>
</evidence>
<evidence type="ECO:0000312" key="24">
    <source>
        <dbReference type="EMBL" id="BAB55152.1"/>
    </source>
</evidence>
<evidence type="ECO:0000312" key="25">
    <source>
        <dbReference type="HGNC" id="HGNC:6896"/>
    </source>
</evidence>
<evidence type="ECO:0007744" key="26">
    <source>
    </source>
</evidence>
<evidence type="ECO:0007744" key="27">
    <source>
    </source>
</evidence>
<evidence type="ECO:0007829" key="28">
    <source>
        <dbReference type="PDB" id="3OSE"/>
    </source>
</evidence>
<evidence type="ECO:0007829" key="29">
    <source>
        <dbReference type="PDB" id="6C9D"/>
    </source>
</evidence>
<keyword id="KW-0002">3D-structure</keyword>
<keyword id="KW-0025">Alternative splicing</keyword>
<keyword id="KW-0067">ATP-binding</keyword>
<keyword id="KW-1269">Autism</keyword>
<keyword id="KW-1268">Autism spectrum disorder</keyword>
<keyword id="KW-1003">Cell membrane</keyword>
<keyword id="KW-0966">Cell projection</keyword>
<keyword id="KW-0963">Cytoplasm</keyword>
<keyword id="KW-0206">Cytoskeleton</keyword>
<keyword id="KW-0418">Kinase</keyword>
<keyword id="KW-0446">Lipid-binding</keyword>
<keyword id="KW-0460">Magnesium</keyword>
<keyword id="KW-0472">Membrane</keyword>
<keyword id="KW-0479">Metal-binding</keyword>
<keyword id="KW-0547">Nucleotide-binding</keyword>
<keyword id="KW-0597">Phosphoprotein</keyword>
<keyword id="KW-1267">Proteomics identification</keyword>
<keyword id="KW-1185">Reference proteome</keyword>
<keyword id="KW-0723">Serine/threonine-protein kinase</keyword>
<keyword id="KW-0808">Transferase</keyword>
<keyword id="KW-0879">Wnt signaling pathway</keyword>
<name>MARK1_HUMAN</name>